<gene>
    <name evidence="1" type="primary">gpsA</name>
    <name type="ordered locus">MS2213</name>
</gene>
<sequence>MSIQASPVTILGAGSYGTALAIALSRNGYPTYLWGHNPTACAQMAQERQNARFLPDISFPEALRVESDLKSAVEKSKDLLIVVPSHVFGEVIQQIKPFLHNRHRIIWATKGLERGTGRLLQNLVEQELGSQYPLAVLSGPTFAKELAAGLPTAITLAAENEQFAKEFQARIHCSKHFRVYINNDMVGVQLGGAIKNVIAISAGMSDGMGFGANARTALITRGIAEISRLGVSLGANVNTFMGMSGLGDLVLTCTDNQSRNRRFGMMLGQGVDARTAMDEIGQVVEGYYNTKEAYMLAQKQGIEMPITEQIYQVLFCGKDAKEAATALLGRKSKVE</sequence>
<organism>
    <name type="scientific">Mannheimia succiniciproducens (strain KCTC 0769BP / MBEL55E)</name>
    <dbReference type="NCBI Taxonomy" id="221988"/>
    <lineage>
        <taxon>Bacteria</taxon>
        <taxon>Pseudomonadati</taxon>
        <taxon>Pseudomonadota</taxon>
        <taxon>Gammaproteobacteria</taxon>
        <taxon>Pasteurellales</taxon>
        <taxon>Pasteurellaceae</taxon>
        <taxon>Basfia</taxon>
    </lineage>
</organism>
<comment type="function">
    <text evidence="1">Catalyzes the reduction of the glycolytic intermediate dihydroxyacetone phosphate (DHAP) to sn-glycerol 3-phosphate (G3P), the key precursor for phospholipid synthesis.</text>
</comment>
<comment type="catalytic activity">
    <reaction evidence="1">
        <text>sn-glycerol 3-phosphate + NAD(+) = dihydroxyacetone phosphate + NADH + H(+)</text>
        <dbReference type="Rhea" id="RHEA:11092"/>
        <dbReference type="ChEBI" id="CHEBI:15378"/>
        <dbReference type="ChEBI" id="CHEBI:57540"/>
        <dbReference type="ChEBI" id="CHEBI:57597"/>
        <dbReference type="ChEBI" id="CHEBI:57642"/>
        <dbReference type="ChEBI" id="CHEBI:57945"/>
        <dbReference type="EC" id="1.1.1.94"/>
    </reaction>
    <physiologicalReaction direction="right-to-left" evidence="1">
        <dbReference type="Rhea" id="RHEA:11094"/>
    </physiologicalReaction>
</comment>
<comment type="catalytic activity">
    <reaction evidence="1">
        <text>sn-glycerol 3-phosphate + NADP(+) = dihydroxyacetone phosphate + NADPH + H(+)</text>
        <dbReference type="Rhea" id="RHEA:11096"/>
        <dbReference type="ChEBI" id="CHEBI:15378"/>
        <dbReference type="ChEBI" id="CHEBI:57597"/>
        <dbReference type="ChEBI" id="CHEBI:57642"/>
        <dbReference type="ChEBI" id="CHEBI:57783"/>
        <dbReference type="ChEBI" id="CHEBI:58349"/>
        <dbReference type="EC" id="1.1.1.94"/>
    </reaction>
    <physiologicalReaction direction="right-to-left" evidence="1">
        <dbReference type="Rhea" id="RHEA:11098"/>
    </physiologicalReaction>
</comment>
<comment type="pathway">
    <text evidence="1">Membrane lipid metabolism; glycerophospholipid metabolism.</text>
</comment>
<comment type="subcellular location">
    <subcellularLocation>
        <location evidence="1">Cytoplasm</location>
    </subcellularLocation>
</comment>
<comment type="similarity">
    <text evidence="1">Belongs to the NAD-dependent glycerol-3-phosphate dehydrogenase family.</text>
</comment>
<protein>
    <recommendedName>
        <fullName evidence="1">Glycerol-3-phosphate dehydrogenase [NAD(P)+]</fullName>
        <ecNumber evidence="1">1.1.1.94</ecNumber>
    </recommendedName>
    <alternativeName>
        <fullName evidence="1">NAD(P)(+)-dependent glycerol-3-phosphate dehydrogenase</fullName>
    </alternativeName>
    <alternativeName>
        <fullName evidence="1">NAD(P)H-dependent dihydroxyacetone-phosphate reductase</fullName>
    </alternativeName>
</protein>
<dbReference type="EC" id="1.1.1.94" evidence="1"/>
<dbReference type="EMBL" id="AE016827">
    <property type="protein sequence ID" value="AAU38820.1"/>
    <property type="molecule type" value="Genomic_DNA"/>
</dbReference>
<dbReference type="RefSeq" id="WP_011201364.1">
    <property type="nucleotide sequence ID" value="NC_006300.1"/>
</dbReference>
<dbReference type="SMR" id="Q65QE0"/>
<dbReference type="STRING" id="221988.MS2213"/>
<dbReference type="KEGG" id="msu:MS2213"/>
<dbReference type="eggNOG" id="COG0240">
    <property type="taxonomic scope" value="Bacteria"/>
</dbReference>
<dbReference type="HOGENOM" id="CLU_033449_0_2_6"/>
<dbReference type="OrthoDB" id="9812273at2"/>
<dbReference type="UniPathway" id="UPA00940"/>
<dbReference type="Proteomes" id="UP000000607">
    <property type="component" value="Chromosome"/>
</dbReference>
<dbReference type="GO" id="GO:0005829">
    <property type="term" value="C:cytosol"/>
    <property type="evidence" value="ECO:0007669"/>
    <property type="project" value="TreeGrafter"/>
</dbReference>
<dbReference type="GO" id="GO:0047952">
    <property type="term" value="F:glycerol-3-phosphate dehydrogenase [NAD(P)+] activity"/>
    <property type="evidence" value="ECO:0007669"/>
    <property type="project" value="UniProtKB-UniRule"/>
</dbReference>
<dbReference type="GO" id="GO:0051287">
    <property type="term" value="F:NAD binding"/>
    <property type="evidence" value="ECO:0007669"/>
    <property type="project" value="InterPro"/>
</dbReference>
<dbReference type="GO" id="GO:0005975">
    <property type="term" value="P:carbohydrate metabolic process"/>
    <property type="evidence" value="ECO:0007669"/>
    <property type="project" value="InterPro"/>
</dbReference>
<dbReference type="GO" id="GO:0046167">
    <property type="term" value="P:glycerol-3-phosphate biosynthetic process"/>
    <property type="evidence" value="ECO:0007669"/>
    <property type="project" value="UniProtKB-UniRule"/>
</dbReference>
<dbReference type="GO" id="GO:0046168">
    <property type="term" value="P:glycerol-3-phosphate catabolic process"/>
    <property type="evidence" value="ECO:0007669"/>
    <property type="project" value="InterPro"/>
</dbReference>
<dbReference type="GO" id="GO:0046474">
    <property type="term" value="P:glycerophospholipid biosynthetic process"/>
    <property type="evidence" value="ECO:0007669"/>
    <property type="project" value="TreeGrafter"/>
</dbReference>
<dbReference type="FunFam" id="1.10.1040.10:FF:000001">
    <property type="entry name" value="Glycerol-3-phosphate dehydrogenase [NAD(P)+]"/>
    <property type="match status" value="1"/>
</dbReference>
<dbReference type="FunFam" id="3.40.50.720:FF:000019">
    <property type="entry name" value="Glycerol-3-phosphate dehydrogenase [NAD(P)+]"/>
    <property type="match status" value="1"/>
</dbReference>
<dbReference type="Gene3D" id="1.10.1040.10">
    <property type="entry name" value="N-(1-d-carboxylethyl)-l-norvaline Dehydrogenase, domain 2"/>
    <property type="match status" value="1"/>
</dbReference>
<dbReference type="Gene3D" id="3.40.50.720">
    <property type="entry name" value="NAD(P)-binding Rossmann-like Domain"/>
    <property type="match status" value="1"/>
</dbReference>
<dbReference type="HAMAP" id="MF_00394">
    <property type="entry name" value="NAD_Glyc3P_dehydrog"/>
    <property type="match status" value="1"/>
</dbReference>
<dbReference type="InterPro" id="IPR008927">
    <property type="entry name" value="6-PGluconate_DH-like_C_sf"/>
</dbReference>
<dbReference type="InterPro" id="IPR013328">
    <property type="entry name" value="6PGD_dom2"/>
</dbReference>
<dbReference type="InterPro" id="IPR006168">
    <property type="entry name" value="G3P_DH_NAD-dep"/>
</dbReference>
<dbReference type="InterPro" id="IPR006109">
    <property type="entry name" value="G3P_DH_NAD-dep_C"/>
</dbReference>
<dbReference type="InterPro" id="IPR011128">
    <property type="entry name" value="G3P_DH_NAD-dep_N"/>
</dbReference>
<dbReference type="InterPro" id="IPR036291">
    <property type="entry name" value="NAD(P)-bd_dom_sf"/>
</dbReference>
<dbReference type="NCBIfam" id="NF000939">
    <property type="entry name" value="PRK00094.1-1"/>
    <property type="match status" value="1"/>
</dbReference>
<dbReference type="NCBIfam" id="NF000940">
    <property type="entry name" value="PRK00094.1-2"/>
    <property type="match status" value="1"/>
</dbReference>
<dbReference type="NCBIfam" id="NF000942">
    <property type="entry name" value="PRK00094.1-4"/>
    <property type="match status" value="1"/>
</dbReference>
<dbReference type="PANTHER" id="PTHR11728">
    <property type="entry name" value="GLYCEROL-3-PHOSPHATE DEHYDROGENASE"/>
    <property type="match status" value="1"/>
</dbReference>
<dbReference type="PANTHER" id="PTHR11728:SF1">
    <property type="entry name" value="GLYCEROL-3-PHOSPHATE DEHYDROGENASE [NAD(+)] 2, CHLOROPLASTIC"/>
    <property type="match status" value="1"/>
</dbReference>
<dbReference type="Pfam" id="PF07479">
    <property type="entry name" value="NAD_Gly3P_dh_C"/>
    <property type="match status" value="1"/>
</dbReference>
<dbReference type="Pfam" id="PF01210">
    <property type="entry name" value="NAD_Gly3P_dh_N"/>
    <property type="match status" value="1"/>
</dbReference>
<dbReference type="PIRSF" id="PIRSF000114">
    <property type="entry name" value="Glycerol-3-P_dh"/>
    <property type="match status" value="1"/>
</dbReference>
<dbReference type="PRINTS" id="PR00077">
    <property type="entry name" value="GPDHDRGNASE"/>
</dbReference>
<dbReference type="SUPFAM" id="SSF48179">
    <property type="entry name" value="6-phosphogluconate dehydrogenase C-terminal domain-like"/>
    <property type="match status" value="1"/>
</dbReference>
<dbReference type="SUPFAM" id="SSF51735">
    <property type="entry name" value="NAD(P)-binding Rossmann-fold domains"/>
    <property type="match status" value="1"/>
</dbReference>
<dbReference type="PROSITE" id="PS00957">
    <property type="entry name" value="NAD_G3PDH"/>
    <property type="match status" value="1"/>
</dbReference>
<keyword id="KW-0963">Cytoplasm</keyword>
<keyword id="KW-0444">Lipid biosynthesis</keyword>
<keyword id="KW-0443">Lipid metabolism</keyword>
<keyword id="KW-0520">NAD</keyword>
<keyword id="KW-0521">NADP</keyword>
<keyword id="KW-0547">Nucleotide-binding</keyword>
<keyword id="KW-0560">Oxidoreductase</keyword>
<keyword id="KW-0594">Phospholipid biosynthesis</keyword>
<keyword id="KW-1208">Phospholipid metabolism</keyword>
<reference key="1">
    <citation type="journal article" date="2004" name="Nat. Biotechnol.">
        <title>The genome sequence of the capnophilic rumen bacterium Mannheimia succiniciproducens.</title>
        <authorList>
            <person name="Hong S.H."/>
            <person name="Kim J.S."/>
            <person name="Lee S.Y."/>
            <person name="In Y.H."/>
            <person name="Choi S.S."/>
            <person name="Rih J.-K."/>
            <person name="Kim C.H."/>
            <person name="Jeong H."/>
            <person name="Hur C.G."/>
            <person name="Kim J.J."/>
        </authorList>
    </citation>
    <scope>NUCLEOTIDE SEQUENCE [LARGE SCALE GENOMIC DNA]</scope>
    <source>
        <strain>KCTC 0769BP / MBEL55E</strain>
    </source>
</reference>
<proteinExistence type="inferred from homology"/>
<evidence type="ECO:0000255" key="1">
    <source>
        <dbReference type="HAMAP-Rule" id="MF_00394"/>
    </source>
</evidence>
<name>GPDA_MANSM</name>
<feature type="chain" id="PRO_0000137986" description="Glycerol-3-phosphate dehydrogenase [NAD(P)+]">
    <location>
        <begin position="1"/>
        <end position="335"/>
    </location>
</feature>
<feature type="active site" description="Proton acceptor" evidence="1">
    <location>
        <position position="195"/>
    </location>
</feature>
<feature type="binding site" evidence="1">
    <location>
        <position position="15"/>
    </location>
    <ligand>
        <name>NADPH</name>
        <dbReference type="ChEBI" id="CHEBI:57783"/>
    </ligand>
</feature>
<feature type="binding site" evidence="1">
    <location>
        <position position="16"/>
    </location>
    <ligand>
        <name>NADPH</name>
        <dbReference type="ChEBI" id="CHEBI:57783"/>
    </ligand>
</feature>
<feature type="binding site" evidence="1">
    <location>
        <position position="36"/>
    </location>
    <ligand>
        <name>NADPH</name>
        <dbReference type="ChEBI" id="CHEBI:57783"/>
    </ligand>
</feature>
<feature type="binding site" evidence="1">
    <location>
        <position position="110"/>
    </location>
    <ligand>
        <name>NADPH</name>
        <dbReference type="ChEBI" id="CHEBI:57783"/>
    </ligand>
</feature>
<feature type="binding site" evidence="1">
    <location>
        <position position="110"/>
    </location>
    <ligand>
        <name>sn-glycerol 3-phosphate</name>
        <dbReference type="ChEBI" id="CHEBI:57597"/>
    </ligand>
</feature>
<feature type="binding site" evidence="1">
    <location>
        <position position="139"/>
    </location>
    <ligand>
        <name>sn-glycerol 3-phosphate</name>
        <dbReference type="ChEBI" id="CHEBI:57597"/>
    </ligand>
</feature>
<feature type="binding site" evidence="1">
    <location>
        <position position="141"/>
    </location>
    <ligand>
        <name>sn-glycerol 3-phosphate</name>
        <dbReference type="ChEBI" id="CHEBI:57597"/>
    </ligand>
</feature>
<feature type="binding site" evidence="1">
    <location>
        <position position="143"/>
    </location>
    <ligand>
        <name>NADPH</name>
        <dbReference type="ChEBI" id="CHEBI:57783"/>
    </ligand>
</feature>
<feature type="binding site" evidence="1">
    <location>
        <position position="195"/>
    </location>
    <ligand>
        <name>sn-glycerol 3-phosphate</name>
        <dbReference type="ChEBI" id="CHEBI:57597"/>
    </ligand>
</feature>
<feature type="binding site" evidence="1">
    <location>
        <position position="248"/>
    </location>
    <ligand>
        <name>sn-glycerol 3-phosphate</name>
        <dbReference type="ChEBI" id="CHEBI:57597"/>
    </ligand>
</feature>
<feature type="binding site" evidence="1">
    <location>
        <position position="258"/>
    </location>
    <ligand>
        <name>sn-glycerol 3-phosphate</name>
        <dbReference type="ChEBI" id="CHEBI:57597"/>
    </ligand>
</feature>
<feature type="binding site" evidence="1">
    <location>
        <position position="259"/>
    </location>
    <ligand>
        <name>NADPH</name>
        <dbReference type="ChEBI" id="CHEBI:57783"/>
    </ligand>
</feature>
<feature type="binding site" evidence="1">
    <location>
        <position position="259"/>
    </location>
    <ligand>
        <name>sn-glycerol 3-phosphate</name>
        <dbReference type="ChEBI" id="CHEBI:57597"/>
    </ligand>
</feature>
<feature type="binding site" evidence="1">
    <location>
        <position position="260"/>
    </location>
    <ligand>
        <name>sn-glycerol 3-phosphate</name>
        <dbReference type="ChEBI" id="CHEBI:57597"/>
    </ligand>
</feature>
<feature type="binding site" evidence="1">
    <location>
        <position position="283"/>
    </location>
    <ligand>
        <name>NADPH</name>
        <dbReference type="ChEBI" id="CHEBI:57783"/>
    </ligand>
</feature>
<feature type="binding site" evidence="1">
    <location>
        <position position="285"/>
    </location>
    <ligand>
        <name>NADPH</name>
        <dbReference type="ChEBI" id="CHEBI:57783"/>
    </ligand>
</feature>
<accession>Q65QE0</accession>